<proteinExistence type="inferred from homology"/>
<reference key="1">
    <citation type="journal article" date="2007" name="Photosyn. Res.">
        <title>Complete nucleotide sequence of the freshwater unicellular cyanobacterium Synechococcus elongatus PCC 6301 chromosome: gene content and organization.</title>
        <authorList>
            <person name="Sugita C."/>
            <person name="Ogata K."/>
            <person name="Shikata M."/>
            <person name="Jikuya H."/>
            <person name="Takano J."/>
            <person name="Furumichi M."/>
            <person name="Kanehisa M."/>
            <person name="Omata T."/>
            <person name="Sugiura M."/>
            <person name="Sugita M."/>
        </authorList>
    </citation>
    <scope>NUCLEOTIDE SEQUENCE [LARGE SCALE GENOMIC DNA]</scope>
    <source>
        <strain>ATCC 27144 / PCC 6301 / SAUG 1402/1</strain>
    </source>
</reference>
<accession>Q5N4X6</accession>
<gene>
    <name evidence="1" type="primary">thiC</name>
    <name type="ordered locus">syc0453_d</name>
</gene>
<sequence>MRSDWIAPRRGQANVTQMHYARQGVITEEMDFVARRENLPADLIRDEVARGRMVIPANINHTNLEPMAIGIASKCKVNANIGASPNASNIDEEVEKLKLAVKYGADTVMDLSTGGGNLDEIRTAIINASPVPIGTVPVYQALESVHGRIEKHSADDFLHVIEKHCEQGVDYQTIHAGLLIEHLPKVKSRITGIVSRGGGIIAQWVLYHHKQNPLYTHFRDIIEIFKRYDCSFGLGDSLRPGCLHDASDDAQLSELKTLGQLTRVAWEHDVQVMVEGPGHVPMDQIEFNVRKQMEECSEAPFYVLGPLVTDIAPGYDHITSAIGAAMAGWYGTAMLCYVTPKEHLGLPNAEDVRNGLIAYKIAAHAADIARHRPGARDRDDELSRARYAFDWNKQFDLSLDPERAREYHDETLPADIYKTAEFCSMCGPKHCPMQTKITEEDLTELEKFLEKDSALA</sequence>
<feature type="chain" id="PRO_0000242305" description="Phosphomethylpyrimidine synthase">
    <location>
        <begin position="1"/>
        <end position="456"/>
    </location>
</feature>
<feature type="binding site" evidence="1">
    <location>
        <position position="80"/>
    </location>
    <ligand>
        <name>substrate</name>
    </ligand>
</feature>
<feature type="binding site" evidence="1">
    <location>
        <position position="109"/>
    </location>
    <ligand>
        <name>substrate</name>
    </ligand>
</feature>
<feature type="binding site" evidence="1">
    <location>
        <position position="139"/>
    </location>
    <ligand>
        <name>substrate</name>
    </ligand>
</feature>
<feature type="binding site" evidence="1">
    <location>
        <position position="175"/>
    </location>
    <ligand>
        <name>substrate</name>
    </ligand>
</feature>
<feature type="binding site" evidence="1">
    <location>
        <begin position="195"/>
        <end position="197"/>
    </location>
    <ligand>
        <name>substrate</name>
    </ligand>
</feature>
<feature type="binding site" evidence="1">
    <location>
        <begin position="236"/>
        <end position="239"/>
    </location>
    <ligand>
        <name>substrate</name>
    </ligand>
</feature>
<feature type="binding site" evidence="1">
    <location>
        <position position="275"/>
    </location>
    <ligand>
        <name>substrate</name>
    </ligand>
</feature>
<feature type="binding site" evidence="1">
    <location>
        <position position="279"/>
    </location>
    <ligand>
        <name>Zn(2+)</name>
        <dbReference type="ChEBI" id="CHEBI:29105"/>
    </ligand>
</feature>
<feature type="binding site" evidence="1">
    <location>
        <position position="302"/>
    </location>
    <ligand>
        <name>substrate</name>
    </ligand>
</feature>
<feature type="binding site" evidence="1">
    <location>
        <position position="343"/>
    </location>
    <ligand>
        <name>Zn(2+)</name>
        <dbReference type="ChEBI" id="CHEBI:29105"/>
    </ligand>
</feature>
<feature type="binding site" evidence="1">
    <location>
        <position position="423"/>
    </location>
    <ligand>
        <name>[4Fe-4S] cluster</name>
        <dbReference type="ChEBI" id="CHEBI:49883"/>
        <note>4Fe-4S-S-AdoMet</note>
    </ligand>
</feature>
<feature type="binding site" evidence="1">
    <location>
        <position position="426"/>
    </location>
    <ligand>
        <name>[4Fe-4S] cluster</name>
        <dbReference type="ChEBI" id="CHEBI:49883"/>
        <note>4Fe-4S-S-AdoMet</note>
    </ligand>
</feature>
<feature type="binding site" evidence="1">
    <location>
        <position position="431"/>
    </location>
    <ligand>
        <name>[4Fe-4S] cluster</name>
        <dbReference type="ChEBI" id="CHEBI:49883"/>
        <note>4Fe-4S-S-AdoMet</note>
    </ligand>
</feature>
<protein>
    <recommendedName>
        <fullName evidence="1">Phosphomethylpyrimidine synthase</fullName>
        <ecNumber evidence="1">4.1.99.17</ecNumber>
    </recommendedName>
    <alternativeName>
        <fullName evidence="1">Hydroxymethylpyrimidine phosphate synthase</fullName>
        <shortName evidence="1">HMP-P synthase</shortName>
        <shortName evidence="1">HMP-phosphate synthase</shortName>
        <shortName evidence="1">HMPP synthase</shortName>
    </alternativeName>
    <alternativeName>
        <fullName evidence="1">Thiamine biosynthesis protein ThiC</fullName>
    </alternativeName>
</protein>
<dbReference type="EC" id="4.1.99.17" evidence="1"/>
<dbReference type="EMBL" id="AP008231">
    <property type="protein sequence ID" value="BAD78643.1"/>
    <property type="molecule type" value="Genomic_DNA"/>
</dbReference>
<dbReference type="RefSeq" id="WP_011242765.1">
    <property type="nucleotide sequence ID" value="NC_006576.1"/>
</dbReference>
<dbReference type="SMR" id="Q5N4X6"/>
<dbReference type="KEGG" id="syc:syc0453_d"/>
<dbReference type="eggNOG" id="COG0422">
    <property type="taxonomic scope" value="Bacteria"/>
</dbReference>
<dbReference type="UniPathway" id="UPA00060"/>
<dbReference type="Proteomes" id="UP000001175">
    <property type="component" value="Chromosome"/>
</dbReference>
<dbReference type="GO" id="GO:0005829">
    <property type="term" value="C:cytosol"/>
    <property type="evidence" value="ECO:0007669"/>
    <property type="project" value="TreeGrafter"/>
</dbReference>
<dbReference type="GO" id="GO:0051539">
    <property type="term" value="F:4 iron, 4 sulfur cluster binding"/>
    <property type="evidence" value="ECO:0007669"/>
    <property type="project" value="UniProtKB-KW"/>
</dbReference>
<dbReference type="GO" id="GO:0016830">
    <property type="term" value="F:carbon-carbon lyase activity"/>
    <property type="evidence" value="ECO:0007669"/>
    <property type="project" value="InterPro"/>
</dbReference>
<dbReference type="GO" id="GO:0008270">
    <property type="term" value="F:zinc ion binding"/>
    <property type="evidence" value="ECO:0007669"/>
    <property type="project" value="UniProtKB-UniRule"/>
</dbReference>
<dbReference type="GO" id="GO:0009228">
    <property type="term" value="P:thiamine biosynthetic process"/>
    <property type="evidence" value="ECO:0007669"/>
    <property type="project" value="UniProtKB-KW"/>
</dbReference>
<dbReference type="GO" id="GO:0009229">
    <property type="term" value="P:thiamine diphosphate biosynthetic process"/>
    <property type="evidence" value="ECO:0007669"/>
    <property type="project" value="UniProtKB-UniRule"/>
</dbReference>
<dbReference type="FunFam" id="3.20.20.540:FF:000001">
    <property type="entry name" value="Phosphomethylpyrimidine synthase"/>
    <property type="match status" value="1"/>
</dbReference>
<dbReference type="Gene3D" id="6.10.250.620">
    <property type="match status" value="1"/>
</dbReference>
<dbReference type="Gene3D" id="3.20.20.540">
    <property type="entry name" value="Radical SAM ThiC family, central domain"/>
    <property type="match status" value="1"/>
</dbReference>
<dbReference type="HAMAP" id="MF_00089">
    <property type="entry name" value="ThiC"/>
    <property type="match status" value="1"/>
</dbReference>
<dbReference type="InterPro" id="IPR037509">
    <property type="entry name" value="ThiC"/>
</dbReference>
<dbReference type="InterPro" id="IPR038521">
    <property type="entry name" value="ThiC/Bza_core_dom"/>
</dbReference>
<dbReference type="InterPro" id="IPR002817">
    <property type="entry name" value="ThiC/BzaA/B"/>
</dbReference>
<dbReference type="NCBIfam" id="NF006763">
    <property type="entry name" value="PRK09284.1"/>
    <property type="match status" value="1"/>
</dbReference>
<dbReference type="NCBIfam" id="NF009895">
    <property type="entry name" value="PRK13352.1"/>
    <property type="match status" value="1"/>
</dbReference>
<dbReference type="NCBIfam" id="TIGR00190">
    <property type="entry name" value="thiC"/>
    <property type="match status" value="1"/>
</dbReference>
<dbReference type="PANTHER" id="PTHR30557:SF1">
    <property type="entry name" value="PHOSPHOMETHYLPYRIMIDINE SYNTHASE, CHLOROPLASTIC"/>
    <property type="match status" value="1"/>
</dbReference>
<dbReference type="PANTHER" id="PTHR30557">
    <property type="entry name" value="THIAMINE BIOSYNTHESIS PROTEIN THIC"/>
    <property type="match status" value="1"/>
</dbReference>
<dbReference type="Pfam" id="PF01964">
    <property type="entry name" value="ThiC_Rad_SAM"/>
    <property type="match status" value="1"/>
</dbReference>
<dbReference type="SFLD" id="SFLDF00407">
    <property type="entry name" value="phosphomethylpyrimidine_syntha"/>
    <property type="match status" value="1"/>
</dbReference>
<dbReference type="SFLD" id="SFLDG01114">
    <property type="entry name" value="phosphomethylpyrimidine_syntha"/>
    <property type="match status" value="1"/>
</dbReference>
<dbReference type="SFLD" id="SFLDS00113">
    <property type="entry name" value="Radical_SAM_Phosphomethylpyrim"/>
    <property type="match status" value="1"/>
</dbReference>
<name>THIC_SYNP6</name>
<organism>
    <name type="scientific">Synechococcus sp. (strain ATCC 27144 / PCC 6301 / SAUG 1402/1)</name>
    <name type="common">Anacystis nidulans</name>
    <dbReference type="NCBI Taxonomy" id="269084"/>
    <lineage>
        <taxon>Bacteria</taxon>
        <taxon>Bacillati</taxon>
        <taxon>Cyanobacteriota</taxon>
        <taxon>Cyanophyceae</taxon>
        <taxon>Synechococcales</taxon>
        <taxon>Synechococcaceae</taxon>
        <taxon>Synechococcus</taxon>
    </lineage>
</organism>
<comment type="function">
    <text evidence="1">Catalyzes the synthesis of the hydroxymethylpyrimidine phosphate (HMP-P) moiety of thiamine from aminoimidazole ribotide (AIR) in a radical S-adenosyl-L-methionine (SAM)-dependent reaction.</text>
</comment>
<comment type="catalytic activity">
    <reaction evidence="1">
        <text>5-amino-1-(5-phospho-beta-D-ribosyl)imidazole + S-adenosyl-L-methionine = 4-amino-2-methyl-5-(phosphooxymethyl)pyrimidine + CO + 5'-deoxyadenosine + formate + L-methionine + 3 H(+)</text>
        <dbReference type="Rhea" id="RHEA:24840"/>
        <dbReference type="ChEBI" id="CHEBI:15378"/>
        <dbReference type="ChEBI" id="CHEBI:15740"/>
        <dbReference type="ChEBI" id="CHEBI:17245"/>
        <dbReference type="ChEBI" id="CHEBI:17319"/>
        <dbReference type="ChEBI" id="CHEBI:57844"/>
        <dbReference type="ChEBI" id="CHEBI:58354"/>
        <dbReference type="ChEBI" id="CHEBI:59789"/>
        <dbReference type="ChEBI" id="CHEBI:137981"/>
        <dbReference type="EC" id="4.1.99.17"/>
    </reaction>
</comment>
<comment type="cofactor">
    <cofactor evidence="1">
        <name>[4Fe-4S] cluster</name>
        <dbReference type="ChEBI" id="CHEBI:49883"/>
    </cofactor>
    <text evidence="1">Binds 1 [4Fe-4S] cluster per subunit. The cluster is coordinated with 3 cysteines and an exchangeable S-adenosyl-L-methionine.</text>
</comment>
<comment type="pathway">
    <text evidence="1">Cofactor biosynthesis; thiamine diphosphate biosynthesis.</text>
</comment>
<comment type="similarity">
    <text evidence="1">Belongs to the ThiC family.</text>
</comment>
<evidence type="ECO:0000255" key="1">
    <source>
        <dbReference type="HAMAP-Rule" id="MF_00089"/>
    </source>
</evidence>
<keyword id="KW-0004">4Fe-4S</keyword>
<keyword id="KW-0408">Iron</keyword>
<keyword id="KW-0411">Iron-sulfur</keyword>
<keyword id="KW-0456">Lyase</keyword>
<keyword id="KW-0479">Metal-binding</keyword>
<keyword id="KW-0949">S-adenosyl-L-methionine</keyword>
<keyword id="KW-0784">Thiamine biosynthesis</keyword>
<keyword id="KW-0862">Zinc</keyword>